<accession>Q9MLL5</accession>
<evidence type="ECO:0000250" key="1"/>
<evidence type="ECO:0000250" key="2">
    <source>
        <dbReference type="UniProtKB" id="P00157"/>
    </source>
</evidence>
<evidence type="ECO:0000255" key="3">
    <source>
        <dbReference type="PROSITE-ProRule" id="PRU00967"/>
    </source>
</evidence>
<evidence type="ECO:0000255" key="4">
    <source>
        <dbReference type="PROSITE-ProRule" id="PRU00968"/>
    </source>
</evidence>
<proteinExistence type="inferred from homology"/>
<geneLocation type="mitochondrion"/>
<feature type="chain" id="PRO_0000060521" description="Cytochrome b">
    <location>
        <begin position="1"/>
        <end position="372"/>
    </location>
</feature>
<feature type="transmembrane region" description="Helical" evidence="2">
    <location>
        <begin position="25"/>
        <end position="45"/>
    </location>
</feature>
<feature type="transmembrane region" description="Helical" evidence="2">
    <location>
        <begin position="69"/>
        <end position="90"/>
    </location>
</feature>
<feature type="transmembrane region" description="Helical" evidence="2">
    <location>
        <begin position="105"/>
        <end position="125"/>
    </location>
</feature>
<feature type="transmembrane region" description="Helical" evidence="2">
    <location>
        <begin position="170"/>
        <end position="190"/>
    </location>
</feature>
<feature type="transmembrane region" description="Helical" evidence="2">
    <location>
        <begin position="218"/>
        <end position="238"/>
    </location>
</feature>
<feature type="transmembrane region" description="Helical" evidence="2">
    <location>
        <begin position="280"/>
        <end position="300"/>
    </location>
</feature>
<feature type="transmembrane region" description="Helical" evidence="2">
    <location>
        <begin position="312"/>
        <end position="332"/>
    </location>
</feature>
<feature type="transmembrane region" description="Helical" evidence="2">
    <location>
        <begin position="339"/>
        <end position="358"/>
    </location>
</feature>
<feature type="binding site" description="axial binding residue" evidence="2">
    <location>
        <position position="75"/>
    </location>
    <ligand>
        <name>heme b</name>
        <dbReference type="ChEBI" id="CHEBI:60344"/>
        <label>b562</label>
    </ligand>
    <ligandPart>
        <name>Fe</name>
        <dbReference type="ChEBI" id="CHEBI:18248"/>
    </ligandPart>
</feature>
<feature type="binding site" description="axial binding residue" evidence="2">
    <location>
        <position position="89"/>
    </location>
    <ligand>
        <name>heme b</name>
        <dbReference type="ChEBI" id="CHEBI:60344"/>
        <label>b566</label>
    </ligand>
    <ligandPart>
        <name>Fe</name>
        <dbReference type="ChEBI" id="CHEBI:18248"/>
    </ligandPart>
</feature>
<feature type="binding site" description="axial binding residue" evidence="2">
    <location>
        <position position="174"/>
    </location>
    <ligand>
        <name>heme b</name>
        <dbReference type="ChEBI" id="CHEBI:60344"/>
        <label>b562</label>
    </ligand>
    <ligandPart>
        <name>Fe</name>
        <dbReference type="ChEBI" id="CHEBI:18248"/>
    </ligandPart>
</feature>
<feature type="binding site" description="axial binding residue" evidence="2">
    <location>
        <position position="188"/>
    </location>
    <ligand>
        <name>heme b</name>
        <dbReference type="ChEBI" id="CHEBI:60344"/>
        <label>b566</label>
    </ligand>
    <ligandPart>
        <name>Fe</name>
        <dbReference type="ChEBI" id="CHEBI:18248"/>
    </ligandPart>
</feature>
<feature type="binding site" evidence="2">
    <location>
        <position position="193"/>
    </location>
    <ligand>
        <name>a ubiquinone</name>
        <dbReference type="ChEBI" id="CHEBI:16389"/>
    </ligand>
</feature>
<gene>
    <name type="primary">MT-CYB</name>
    <name type="synonym">COB</name>
    <name type="synonym">CYTB</name>
    <name type="synonym">MTCYB</name>
</gene>
<reference key="1">
    <citation type="journal article" date="2000" name="Mol. Phylogenet. Evol.">
        <title>Phylogenetic relationships of elapid snakes based on cytochrome b mtDNA sequences.</title>
        <authorList>
            <person name="Slowinski J.B."/>
            <person name="Keogh J.S."/>
        </authorList>
    </citation>
    <scope>NUCLEOTIDE SEQUENCE [GENOMIC DNA]</scope>
</reference>
<organism>
    <name type="scientific">Acanthophis antarcticus</name>
    <name type="common">Common death adder</name>
    <dbReference type="NCBI Taxonomy" id="8605"/>
    <lineage>
        <taxon>Eukaryota</taxon>
        <taxon>Metazoa</taxon>
        <taxon>Chordata</taxon>
        <taxon>Craniata</taxon>
        <taxon>Vertebrata</taxon>
        <taxon>Euteleostomi</taxon>
        <taxon>Lepidosauria</taxon>
        <taxon>Squamata</taxon>
        <taxon>Bifurcata</taxon>
        <taxon>Unidentata</taxon>
        <taxon>Episquamata</taxon>
        <taxon>Toxicofera</taxon>
        <taxon>Serpentes</taxon>
        <taxon>Colubroidea</taxon>
        <taxon>Elapidae</taxon>
        <taxon>Hydrophiinae</taxon>
        <taxon>Acanthophis</taxon>
    </lineage>
</organism>
<comment type="function">
    <text evidence="2">Component of the ubiquinol-cytochrome c reductase complex (complex III or cytochrome b-c1 complex) that is part of the mitochondrial respiratory chain. The b-c1 complex mediates electron transfer from ubiquinol to cytochrome c. Contributes to the generation of a proton gradient across the mitochondrial membrane that is then used for ATP synthesis.</text>
</comment>
<comment type="cofactor">
    <cofactor evidence="2">
        <name>heme b</name>
        <dbReference type="ChEBI" id="CHEBI:60344"/>
    </cofactor>
    <text evidence="2">Binds 2 heme b groups non-covalently.</text>
</comment>
<comment type="subunit">
    <text evidence="2">The cytochrome bc1 complex contains 3 respiratory subunits (MT-CYB, CYC1 and UQCRFS1), 2 core proteins (UQCRC1 and UQCRC2) and probably 6 low-molecular weight proteins.</text>
</comment>
<comment type="subcellular location">
    <subcellularLocation>
        <location evidence="2">Mitochondrion inner membrane</location>
        <topology evidence="2">Multi-pass membrane protein</topology>
    </subcellularLocation>
</comment>
<comment type="miscellaneous">
    <text evidence="1">Heme 1 (or BL or b562) is low-potential and absorbs at about 562 nm, and heme 2 (or BH or b566) is high-potential and absorbs at about 566 nm.</text>
</comment>
<comment type="similarity">
    <text evidence="3 4">Belongs to the cytochrome b family.</text>
</comment>
<comment type="caution">
    <text evidence="2">The full-length protein contains only eight transmembrane helices, not nine as predicted by bioinformatics tools.</text>
</comment>
<sequence length="372" mass="41998">MSNQHTLLSSNLLPVGSNISTWWNFGSMLLTCLALQISTGFFLAIHYTANINLAFSSVTHIMRDVPYGWTMQNLHAIGASMFFICIYIHIARGLYYGLYLNKEVWLSGTVLLITLMATAFFGYVLPWGQMSFWAATVITNLLTAIPYLGTTLTTWLWGGFSINDPTLTRFFALHFILPFLIVSLSSIHIILLHNEGSNNPLGTNPDIDKIPFHPYHSYKDILMITVMITTLFSIMAFAPNLFNDPENFSKANPLVTPQHIKPEWYFLFAYGILRSIPNKLGGTLALLMSVIILTTAPFTHTSHIRSMAFRPLAQMLFWTLIATFITITWTATKPVEPPFILISQMASIIYFSFFIINPILGWVENKISMTNS</sequence>
<protein>
    <recommendedName>
        <fullName>Cytochrome b</fullName>
    </recommendedName>
    <alternativeName>
        <fullName>Complex III subunit 3</fullName>
    </alternativeName>
    <alternativeName>
        <fullName>Complex III subunit III</fullName>
    </alternativeName>
    <alternativeName>
        <fullName>Cytochrome b-c1 complex subunit 3</fullName>
    </alternativeName>
    <alternativeName>
        <fullName>Ubiquinol-cytochrome-c reductase complex cytochrome b subunit</fullName>
    </alternativeName>
</protein>
<name>CYB_ACAAN</name>
<keyword id="KW-0249">Electron transport</keyword>
<keyword id="KW-0349">Heme</keyword>
<keyword id="KW-0408">Iron</keyword>
<keyword id="KW-0472">Membrane</keyword>
<keyword id="KW-0479">Metal-binding</keyword>
<keyword id="KW-0496">Mitochondrion</keyword>
<keyword id="KW-0999">Mitochondrion inner membrane</keyword>
<keyword id="KW-0679">Respiratory chain</keyword>
<keyword id="KW-0812">Transmembrane</keyword>
<keyword id="KW-1133">Transmembrane helix</keyword>
<keyword id="KW-0813">Transport</keyword>
<keyword id="KW-0830">Ubiquinone</keyword>
<dbReference type="EMBL" id="AF217813">
    <property type="protein sequence ID" value="AAF37232.1"/>
    <property type="molecule type" value="Genomic_DNA"/>
</dbReference>
<dbReference type="SMR" id="Q9MLL5"/>
<dbReference type="GO" id="GO:0005743">
    <property type="term" value="C:mitochondrial inner membrane"/>
    <property type="evidence" value="ECO:0007669"/>
    <property type="project" value="UniProtKB-SubCell"/>
</dbReference>
<dbReference type="GO" id="GO:0045275">
    <property type="term" value="C:respiratory chain complex III"/>
    <property type="evidence" value="ECO:0007669"/>
    <property type="project" value="InterPro"/>
</dbReference>
<dbReference type="GO" id="GO:0046872">
    <property type="term" value="F:metal ion binding"/>
    <property type="evidence" value="ECO:0007669"/>
    <property type="project" value="UniProtKB-KW"/>
</dbReference>
<dbReference type="GO" id="GO:0008121">
    <property type="term" value="F:ubiquinol-cytochrome-c reductase activity"/>
    <property type="evidence" value="ECO:0007669"/>
    <property type="project" value="InterPro"/>
</dbReference>
<dbReference type="GO" id="GO:0006122">
    <property type="term" value="P:mitochondrial electron transport, ubiquinol to cytochrome c"/>
    <property type="evidence" value="ECO:0007669"/>
    <property type="project" value="TreeGrafter"/>
</dbReference>
<dbReference type="CDD" id="cd00290">
    <property type="entry name" value="cytochrome_b_C"/>
    <property type="match status" value="1"/>
</dbReference>
<dbReference type="CDD" id="cd00284">
    <property type="entry name" value="Cytochrome_b_N"/>
    <property type="match status" value="1"/>
</dbReference>
<dbReference type="Gene3D" id="1.20.810.10">
    <property type="entry name" value="Cytochrome Bc1 Complex, Chain C"/>
    <property type="match status" value="1"/>
</dbReference>
<dbReference type="InterPro" id="IPR005798">
    <property type="entry name" value="Cyt_b/b6_C"/>
</dbReference>
<dbReference type="InterPro" id="IPR036150">
    <property type="entry name" value="Cyt_b/b6_C_sf"/>
</dbReference>
<dbReference type="InterPro" id="IPR005797">
    <property type="entry name" value="Cyt_b/b6_N"/>
</dbReference>
<dbReference type="InterPro" id="IPR027387">
    <property type="entry name" value="Cytb/b6-like_sf"/>
</dbReference>
<dbReference type="InterPro" id="IPR030689">
    <property type="entry name" value="Cytochrome_b"/>
</dbReference>
<dbReference type="InterPro" id="IPR048260">
    <property type="entry name" value="Cytochrome_b_C_euk/bac"/>
</dbReference>
<dbReference type="InterPro" id="IPR048259">
    <property type="entry name" value="Cytochrome_b_N_euk/bac"/>
</dbReference>
<dbReference type="InterPro" id="IPR016174">
    <property type="entry name" value="Di-haem_cyt_TM"/>
</dbReference>
<dbReference type="PANTHER" id="PTHR19271">
    <property type="entry name" value="CYTOCHROME B"/>
    <property type="match status" value="1"/>
</dbReference>
<dbReference type="PANTHER" id="PTHR19271:SF16">
    <property type="entry name" value="CYTOCHROME B"/>
    <property type="match status" value="1"/>
</dbReference>
<dbReference type="Pfam" id="PF00032">
    <property type="entry name" value="Cytochrom_B_C"/>
    <property type="match status" value="1"/>
</dbReference>
<dbReference type="Pfam" id="PF00033">
    <property type="entry name" value="Cytochrome_B"/>
    <property type="match status" value="1"/>
</dbReference>
<dbReference type="PIRSF" id="PIRSF038885">
    <property type="entry name" value="COB"/>
    <property type="match status" value="1"/>
</dbReference>
<dbReference type="SUPFAM" id="SSF81648">
    <property type="entry name" value="a domain/subunit of cytochrome bc1 complex (Ubiquinol-cytochrome c reductase)"/>
    <property type="match status" value="1"/>
</dbReference>
<dbReference type="SUPFAM" id="SSF81342">
    <property type="entry name" value="Transmembrane di-heme cytochromes"/>
    <property type="match status" value="1"/>
</dbReference>
<dbReference type="PROSITE" id="PS51003">
    <property type="entry name" value="CYTB_CTER"/>
    <property type="match status" value="1"/>
</dbReference>
<dbReference type="PROSITE" id="PS51002">
    <property type="entry name" value="CYTB_NTER"/>
    <property type="match status" value="1"/>
</dbReference>